<evidence type="ECO:0000255" key="1">
    <source>
        <dbReference type="HAMAP-Rule" id="MF_00494"/>
    </source>
</evidence>
<organism>
    <name type="scientific">Leptospira borgpetersenii serovar Hardjo-bovis (strain L550)</name>
    <dbReference type="NCBI Taxonomy" id="355276"/>
    <lineage>
        <taxon>Bacteria</taxon>
        <taxon>Pseudomonadati</taxon>
        <taxon>Spirochaetota</taxon>
        <taxon>Spirochaetia</taxon>
        <taxon>Leptospirales</taxon>
        <taxon>Leptospiraceae</taxon>
        <taxon>Leptospira</taxon>
    </lineage>
</organism>
<protein>
    <recommendedName>
        <fullName evidence="1">Probable transaldolase</fullName>
        <ecNumber evidence="1">2.2.1.2</ecNumber>
    </recommendedName>
</protein>
<sequence length="214" mass="23599">MELYLDTANIDEIKEIASYGLVDGVTTNPSIIAKSGRNFREVIKEICSIVSGPVSAEVLSTKFDGMMKEALELVEIAENVVIKVPLIPEGLKTVVELTKRNIPTNVTLCFSSSQALLAAKAGATYISPFIGRVDDTSWDGMELISEIREIYDNYGYDTRILAASIRGPMHLKESALRGADCATMPHSAFLQLFKHPLTDIGLEKFLEDSKKLKW</sequence>
<keyword id="KW-0963">Cytoplasm</keyword>
<keyword id="KW-0570">Pentose shunt</keyword>
<keyword id="KW-0704">Schiff base</keyword>
<keyword id="KW-0808">Transferase</keyword>
<proteinExistence type="inferred from homology"/>
<dbReference type="EC" id="2.2.1.2" evidence="1"/>
<dbReference type="EMBL" id="CP000348">
    <property type="protein sequence ID" value="ABJ79014.1"/>
    <property type="molecule type" value="Genomic_DNA"/>
</dbReference>
<dbReference type="SMR" id="Q051I1"/>
<dbReference type="KEGG" id="lbl:LBL_1551"/>
<dbReference type="HOGENOM" id="CLU_079764_0_0_12"/>
<dbReference type="UniPathway" id="UPA00115">
    <property type="reaction ID" value="UER00414"/>
</dbReference>
<dbReference type="GO" id="GO:0005737">
    <property type="term" value="C:cytoplasm"/>
    <property type="evidence" value="ECO:0007669"/>
    <property type="project" value="UniProtKB-SubCell"/>
</dbReference>
<dbReference type="GO" id="GO:0016832">
    <property type="term" value="F:aldehyde-lyase activity"/>
    <property type="evidence" value="ECO:0007669"/>
    <property type="project" value="InterPro"/>
</dbReference>
<dbReference type="GO" id="GO:0004801">
    <property type="term" value="F:transaldolase activity"/>
    <property type="evidence" value="ECO:0007669"/>
    <property type="project" value="UniProtKB-UniRule"/>
</dbReference>
<dbReference type="GO" id="GO:0005975">
    <property type="term" value="P:carbohydrate metabolic process"/>
    <property type="evidence" value="ECO:0007669"/>
    <property type="project" value="InterPro"/>
</dbReference>
<dbReference type="GO" id="GO:0006098">
    <property type="term" value="P:pentose-phosphate shunt"/>
    <property type="evidence" value="ECO:0007669"/>
    <property type="project" value="UniProtKB-UniRule"/>
</dbReference>
<dbReference type="CDD" id="cd00956">
    <property type="entry name" value="Transaldolase_FSA"/>
    <property type="match status" value="1"/>
</dbReference>
<dbReference type="FunFam" id="3.20.20.70:FF:000018">
    <property type="entry name" value="Probable transaldolase"/>
    <property type="match status" value="1"/>
</dbReference>
<dbReference type="Gene3D" id="3.20.20.70">
    <property type="entry name" value="Aldolase class I"/>
    <property type="match status" value="1"/>
</dbReference>
<dbReference type="HAMAP" id="MF_00494">
    <property type="entry name" value="Transaldolase_3b"/>
    <property type="match status" value="1"/>
</dbReference>
<dbReference type="InterPro" id="IPR013785">
    <property type="entry name" value="Aldolase_TIM"/>
</dbReference>
<dbReference type="InterPro" id="IPR001585">
    <property type="entry name" value="TAL/FSA"/>
</dbReference>
<dbReference type="InterPro" id="IPR022999">
    <property type="entry name" value="Transaldolase_3B"/>
</dbReference>
<dbReference type="InterPro" id="IPR004731">
    <property type="entry name" value="Transaldolase_3B/F6P_aldolase"/>
</dbReference>
<dbReference type="InterPro" id="IPR018225">
    <property type="entry name" value="Transaldolase_AS"/>
</dbReference>
<dbReference type="InterPro" id="IPR033919">
    <property type="entry name" value="TSA/FSA_arc/bac"/>
</dbReference>
<dbReference type="NCBIfam" id="TIGR00875">
    <property type="entry name" value="fsa_talC_mipB"/>
    <property type="match status" value="1"/>
</dbReference>
<dbReference type="PANTHER" id="PTHR10683:SF40">
    <property type="entry name" value="FRUCTOSE-6-PHOSPHATE ALDOLASE 1-RELATED"/>
    <property type="match status" value="1"/>
</dbReference>
<dbReference type="PANTHER" id="PTHR10683">
    <property type="entry name" value="TRANSALDOLASE"/>
    <property type="match status" value="1"/>
</dbReference>
<dbReference type="Pfam" id="PF00923">
    <property type="entry name" value="TAL_FSA"/>
    <property type="match status" value="1"/>
</dbReference>
<dbReference type="SUPFAM" id="SSF51569">
    <property type="entry name" value="Aldolase"/>
    <property type="match status" value="1"/>
</dbReference>
<dbReference type="PROSITE" id="PS01054">
    <property type="entry name" value="TRANSALDOLASE_1"/>
    <property type="match status" value="1"/>
</dbReference>
<name>TAL_LEPBL</name>
<gene>
    <name evidence="1" type="primary">tal</name>
    <name type="ordered locus">LBL_1551</name>
</gene>
<reference key="1">
    <citation type="journal article" date="2006" name="Proc. Natl. Acad. Sci. U.S.A.">
        <title>Genome reduction in Leptospira borgpetersenii reflects limited transmission potential.</title>
        <authorList>
            <person name="Bulach D.M."/>
            <person name="Zuerner R.L."/>
            <person name="Wilson P."/>
            <person name="Seemann T."/>
            <person name="McGrath A."/>
            <person name="Cullen P.A."/>
            <person name="Davis J."/>
            <person name="Johnson M."/>
            <person name="Kuczek E."/>
            <person name="Alt D.P."/>
            <person name="Peterson-Burch B."/>
            <person name="Coppel R.L."/>
            <person name="Rood J.I."/>
            <person name="Davies J.K."/>
            <person name="Adler B."/>
        </authorList>
    </citation>
    <scope>NUCLEOTIDE SEQUENCE [LARGE SCALE GENOMIC DNA]</scope>
    <source>
        <strain>L550</strain>
    </source>
</reference>
<feature type="chain" id="PRO_1000126326" description="Probable transaldolase">
    <location>
        <begin position="1"/>
        <end position="214"/>
    </location>
</feature>
<feature type="active site" description="Schiff-base intermediate with substrate" evidence="1">
    <location>
        <position position="83"/>
    </location>
</feature>
<comment type="function">
    <text evidence="1">Transaldolase is important for the balance of metabolites in the pentose-phosphate pathway.</text>
</comment>
<comment type="catalytic activity">
    <reaction evidence="1">
        <text>D-sedoheptulose 7-phosphate + D-glyceraldehyde 3-phosphate = D-erythrose 4-phosphate + beta-D-fructose 6-phosphate</text>
        <dbReference type="Rhea" id="RHEA:17053"/>
        <dbReference type="ChEBI" id="CHEBI:16897"/>
        <dbReference type="ChEBI" id="CHEBI:57483"/>
        <dbReference type="ChEBI" id="CHEBI:57634"/>
        <dbReference type="ChEBI" id="CHEBI:59776"/>
        <dbReference type="EC" id="2.2.1.2"/>
    </reaction>
</comment>
<comment type="pathway">
    <text evidence="1">Carbohydrate degradation; pentose phosphate pathway; D-glyceraldehyde 3-phosphate and beta-D-fructose 6-phosphate from D-ribose 5-phosphate and D-xylulose 5-phosphate (non-oxidative stage): step 2/3.</text>
</comment>
<comment type="subcellular location">
    <subcellularLocation>
        <location evidence="1">Cytoplasm</location>
    </subcellularLocation>
</comment>
<comment type="similarity">
    <text evidence="1">Belongs to the transaldolase family. Type 3B subfamily.</text>
</comment>
<accession>Q051I1</accession>